<feature type="chain" id="PRO_0000107752" description="RNase adapter protein RapZ">
    <location>
        <begin position="1"/>
        <end position="284"/>
    </location>
</feature>
<feature type="region of interest" description="RNA-binding" evidence="1">
    <location>
        <begin position="266"/>
        <end position="284"/>
    </location>
</feature>
<feature type="binding site" evidence="1">
    <location>
        <begin position="8"/>
        <end position="15"/>
    </location>
    <ligand>
        <name>ATP</name>
        <dbReference type="ChEBI" id="CHEBI:30616"/>
    </ligand>
</feature>
<feature type="binding site" evidence="1">
    <location>
        <begin position="56"/>
        <end position="59"/>
    </location>
    <ligand>
        <name>GTP</name>
        <dbReference type="ChEBI" id="CHEBI:37565"/>
    </ligand>
</feature>
<name>RAPZ_SALTY</name>
<reference key="1">
    <citation type="journal article" date="2001" name="Nature">
        <title>Complete genome sequence of Salmonella enterica serovar Typhimurium LT2.</title>
        <authorList>
            <person name="McClelland M."/>
            <person name="Sanderson K.E."/>
            <person name="Spieth J."/>
            <person name="Clifton S.W."/>
            <person name="Latreille P."/>
            <person name="Courtney L."/>
            <person name="Porwollik S."/>
            <person name="Ali J."/>
            <person name="Dante M."/>
            <person name="Du F."/>
            <person name="Hou S."/>
            <person name="Layman D."/>
            <person name="Leonard S."/>
            <person name="Nguyen C."/>
            <person name="Scott K."/>
            <person name="Holmes A."/>
            <person name="Grewal N."/>
            <person name="Mulvaney E."/>
            <person name="Ryan E."/>
            <person name="Sun H."/>
            <person name="Florea L."/>
            <person name="Miller W."/>
            <person name="Stoneking T."/>
            <person name="Nhan M."/>
            <person name="Waterston R."/>
            <person name="Wilson R.K."/>
        </authorList>
    </citation>
    <scope>NUCLEOTIDE SEQUENCE [LARGE SCALE GENOMIC DNA]</scope>
    <source>
        <strain>LT2 / SGSC1412 / ATCC 700720</strain>
    </source>
</reference>
<comment type="function">
    <text evidence="1">Modulates the synthesis of GlmS, by affecting the processing and stability of the regulatory small RNA GlmZ. When glucosamine-6-phosphate (GlcN6P) concentrations are high in the cell, RapZ binds GlmZ and targets it to cleavage by RNase E. Consequently, GlmZ is inactivated and unable to activate GlmS synthesis. Under low GlcN6P concentrations, RapZ is sequestered and inactivated by an other regulatory small RNA, GlmY, preventing GlmZ degradation and leading to synthesis of GlmS.</text>
</comment>
<comment type="subunit">
    <text evidence="1">Homotrimer.</text>
</comment>
<comment type="similarity">
    <text evidence="1">Belongs to the RapZ-like family. RapZ subfamily.</text>
</comment>
<proteinExistence type="inferred from homology"/>
<gene>
    <name evidence="1" type="primary">rapZ</name>
    <name type="ordered locus">STM3323</name>
</gene>
<keyword id="KW-0067">ATP-binding</keyword>
<keyword id="KW-0342">GTP-binding</keyword>
<keyword id="KW-0547">Nucleotide-binding</keyword>
<keyword id="KW-1185">Reference proteome</keyword>
<keyword id="KW-0694">RNA-binding</keyword>
<evidence type="ECO:0000255" key="1">
    <source>
        <dbReference type="HAMAP-Rule" id="MF_00636"/>
    </source>
</evidence>
<protein>
    <recommendedName>
        <fullName evidence="1">RNase adapter protein RapZ</fullName>
    </recommendedName>
</protein>
<organism>
    <name type="scientific">Salmonella typhimurium (strain LT2 / SGSC1412 / ATCC 700720)</name>
    <dbReference type="NCBI Taxonomy" id="99287"/>
    <lineage>
        <taxon>Bacteria</taxon>
        <taxon>Pseudomonadati</taxon>
        <taxon>Pseudomonadota</taxon>
        <taxon>Gammaproteobacteria</taxon>
        <taxon>Enterobacterales</taxon>
        <taxon>Enterobacteriaceae</taxon>
        <taxon>Salmonella</taxon>
    </lineage>
</organism>
<accession>Q8ZLR8</accession>
<dbReference type="EMBL" id="AE006468">
    <property type="protein sequence ID" value="AAL22192.1"/>
    <property type="molecule type" value="Genomic_DNA"/>
</dbReference>
<dbReference type="RefSeq" id="WP_000243749.1">
    <property type="nucleotide sequence ID" value="NC_003197.2"/>
</dbReference>
<dbReference type="SMR" id="Q8ZLR8"/>
<dbReference type="STRING" id="99287.STM3323"/>
<dbReference type="PaxDb" id="99287-STM3323"/>
<dbReference type="KEGG" id="stm:STM3323"/>
<dbReference type="PATRIC" id="fig|99287.12.peg.3524"/>
<dbReference type="HOGENOM" id="CLU_059558_1_1_6"/>
<dbReference type="OMA" id="GFKHGVP"/>
<dbReference type="PhylomeDB" id="Q8ZLR8"/>
<dbReference type="BioCyc" id="SENT99287:STM3323-MONOMER"/>
<dbReference type="Proteomes" id="UP000001014">
    <property type="component" value="Chromosome"/>
</dbReference>
<dbReference type="GO" id="GO:0005524">
    <property type="term" value="F:ATP binding"/>
    <property type="evidence" value="ECO:0007669"/>
    <property type="project" value="UniProtKB-UniRule"/>
</dbReference>
<dbReference type="GO" id="GO:0005525">
    <property type="term" value="F:GTP binding"/>
    <property type="evidence" value="ECO:0007669"/>
    <property type="project" value="UniProtKB-UniRule"/>
</dbReference>
<dbReference type="GO" id="GO:0060090">
    <property type="term" value="F:molecular adaptor activity"/>
    <property type="evidence" value="ECO:0000318"/>
    <property type="project" value="GO_Central"/>
</dbReference>
<dbReference type="GO" id="GO:0003723">
    <property type="term" value="F:RNA binding"/>
    <property type="evidence" value="ECO:0007669"/>
    <property type="project" value="UniProtKB-KW"/>
</dbReference>
<dbReference type="Gene3D" id="3.40.50.300">
    <property type="entry name" value="P-loop containing nucleotide triphosphate hydrolases"/>
    <property type="match status" value="1"/>
</dbReference>
<dbReference type="HAMAP" id="MF_00636">
    <property type="entry name" value="RapZ_like"/>
    <property type="match status" value="1"/>
</dbReference>
<dbReference type="InterPro" id="IPR027417">
    <property type="entry name" value="P-loop_NTPase"/>
</dbReference>
<dbReference type="InterPro" id="IPR005337">
    <property type="entry name" value="RapZ-like"/>
</dbReference>
<dbReference type="InterPro" id="IPR053930">
    <property type="entry name" value="RapZ-like_N"/>
</dbReference>
<dbReference type="InterPro" id="IPR053931">
    <property type="entry name" value="RapZ_C"/>
</dbReference>
<dbReference type="NCBIfam" id="NF003828">
    <property type="entry name" value="PRK05416.1"/>
    <property type="match status" value="1"/>
</dbReference>
<dbReference type="PANTHER" id="PTHR30448">
    <property type="entry name" value="RNASE ADAPTER PROTEIN RAPZ"/>
    <property type="match status" value="1"/>
</dbReference>
<dbReference type="PANTHER" id="PTHR30448:SF0">
    <property type="entry name" value="RNASE ADAPTER PROTEIN RAPZ"/>
    <property type="match status" value="1"/>
</dbReference>
<dbReference type="Pfam" id="PF22740">
    <property type="entry name" value="PapZ_C"/>
    <property type="match status" value="1"/>
</dbReference>
<dbReference type="Pfam" id="PF03668">
    <property type="entry name" value="RapZ-like_N"/>
    <property type="match status" value="1"/>
</dbReference>
<dbReference type="PIRSF" id="PIRSF005052">
    <property type="entry name" value="P-loopkin"/>
    <property type="match status" value="1"/>
</dbReference>
<dbReference type="SUPFAM" id="SSF52540">
    <property type="entry name" value="P-loop containing nucleoside triphosphate hydrolases"/>
    <property type="match status" value="1"/>
</dbReference>
<sequence length="284" mass="32464">MVLMIVSGRSGSGKSVALRALEDMGFYCVDNLPVVLLPDLARTLADRQISAAVSIDVRNMPESPEIFEQAMNNLPGAFSPQLLFLDADRNTLIRRYSDTRRLHPLSSKNLSLESAIDKESDLLEPLRSRADLIVDTSEMSVHELAEMLRTRLLGKRERELTMVFESFGFKHGIPIDADYVFDVRFLPNPHWDPKLRPMTGLDKPVAAFLDRHTEVHNFIYQTRSYLELWLPMLETNNRSYLTVAIGCTGGKHRSVYIAEQLADYFRSRGKNVQSRHRTLEKRKT</sequence>